<organism>
    <name type="scientific">Eremothecium gossypii (strain ATCC 10895 / CBS 109.51 / FGSC 9923 / NRRL Y-1056)</name>
    <name type="common">Yeast</name>
    <name type="synonym">Ashbya gossypii</name>
    <dbReference type="NCBI Taxonomy" id="284811"/>
    <lineage>
        <taxon>Eukaryota</taxon>
        <taxon>Fungi</taxon>
        <taxon>Dikarya</taxon>
        <taxon>Ascomycota</taxon>
        <taxon>Saccharomycotina</taxon>
        <taxon>Saccharomycetes</taxon>
        <taxon>Saccharomycetales</taxon>
        <taxon>Saccharomycetaceae</taxon>
        <taxon>Eremothecium</taxon>
    </lineage>
</organism>
<dbReference type="EMBL" id="AE016817">
    <property type="protein sequence ID" value="AAS51855.2"/>
    <property type="molecule type" value="Genomic_DNA"/>
</dbReference>
<dbReference type="RefSeq" id="NP_984031.2">
    <property type="nucleotide sequence ID" value="NM_209384.2"/>
</dbReference>
<dbReference type="SMR" id="Q75AJ2"/>
<dbReference type="FunCoup" id="Q75AJ2">
    <property type="interactions" value="66"/>
</dbReference>
<dbReference type="EnsemblFungi" id="AAS51855">
    <property type="protein sequence ID" value="AAS51855"/>
    <property type="gene ID" value="AGOS_ADL065W"/>
</dbReference>
<dbReference type="GeneID" id="4620192"/>
<dbReference type="KEGG" id="ago:AGOS_ADL065W"/>
<dbReference type="eggNOG" id="ENOG502RZ9F">
    <property type="taxonomic scope" value="Eukaryota"/>
</dbReference>
<dbReference type="HOGENOM" id="CLU_118207_0_0_1"/>
<dbReference type="InParanoid" id="Q75AJ2"/>
<dbReference type="OMA" id="HLKYYPP"/>
<dbReference type="OrthoDB" id="4082176at2759"/>
<dbReference type="Proteomes" id="UP000000591">
    <property type="component" value="Chromosome IV"/>
</dbReference>
<dbReference type="GO" id="GO:0005886">
    <property type="term" value="C:plasma membrane"/>
    <property type="evidence" value="ECO:0007669"/>
    <property type="project" value="UniProtKB-SubCell"/>
</dbReference>
<dbReference type="GO" id="GO:0006112">
    <property type="term" value="P:energy reserve metabolic process"/>
    <property type="evidence" value="ECO:0007669"/>
    <property type="project" value="EnsemblFungi"/>
</dbReference>
<dbReference type="Gene3D" id="3.40.1000.40">
    <property type="entry name" value="Respiratory growth induced protein 1"/>
    <property type="match status" value="1"/>
</dbReference>
<dbReference type="InterPro" id="IPR022554">
    <property type="entry name" value="RGI1"/>
</dbReference>
<dbReference type="InterPro" id="IPR038235">
    <property type="entry name" value="RGI1_sf"/>
</dbReference>
<dbReference type="Pfam" id="PF10843">
    <property type="entry name" value="RGI1"/>
    <property type="match status" value="1"/>
</dbReference>
<accession>Q75AJ2</accession>
<reference key="1">
    <citation type="journal article" date="2004" name="Science">
        <title>The Ashbya gossypii genome as a tool for mapping the ancient Saccharomyces cerevisiae genome.</title>
        <authorList>
            <person name="Dietrich F.S."/>
            <person name="Voegeli S."/>
            <person name="Brachat S."/>
            <person name="Lerch A."/>
            <person name="Gates K."/>
            <person name="Steiner S."/>
            <person name="Mohr C."/>
            <person name="Poehlmann R."/>
            <person name="Luedi P."/>
            <person name="Choi S."/>
            <person name="Wing R.A."/>
            <person name="Flavier A."/>
            <person name="Gaffney T.D."/>
            <person name="Philippsen P."/>
        </authorList>
    </citation>
    <scope>NUCLEOTIDE SEQUENCE [LARGE SCALE GENOMIC DNA]</scope>
    <source>
        <strain>ATCC 10895 / CBS 109.51 / FGSC 9923 / NRRL Y-1056</strain>
    </source>
</reference>
<reference key="2">
    <citation type="journal article" date="2013" name="G3 (Bethesda)">
        <title>Genomes of Ashbya fungi isolated from insects reveal four mating-type loci, numerous translocations, lack of transposons, and distinct gene duplications.</title>
        <authorList>
            <person name="Dietrich F.S."/>
            <person name="Voegeli S."/>
            <person name="Kuo S."/>
            <person name="Philippsen P."/>
        </authorList>
    </citation>
    <scope>GENOME REANNOTATION</scope>
    <source>
        <strain>ATCC 10895 / CBS 109.51 / FGSC 9923 / NRRL Y-1056</strain>
    </source>
</reference>
<keyword id="KW-1003">Cell membrane</keyword>
<keyword id="KW-0472">Membrane</keyword>
<keyword id="KW-1185">Reference proteome</keyword>
<sequence length="169" mass="20034">MTKKDKKQKVKVKTVETKEGEKIRVFEDLDSFETYLRGETEDEEFDHVHCQVRYYPPFVLHESHQDPEKIKESANSHNKKFVRHLHQHVEKHLLKDIKDSLGVPELKFKDKSKEENFNHVVWRYHAPTAVRDREFLVHVTVECHNDTAMVDVDYLTEPMQPAVQSEQVA</sequence>
<evidence type="ECO:0000250" key="1"/>
<evidence type="ECO:0000305" key="2"/>
<feature type="chain" id="PRO_0000402278" description="Respiratory growth induced protein 1">
    <location>
        <begin position="1"/>
        <end position="169"/>
    </location>
</feature>
<comment type="function">
    <text evidence="1">Involved in the control of energetic metabolism and significantly contribute to cell fitness, especially under respiratory growth conditions.</text>
</comment>
<comment type="subcellular location">
    <subcellularLocation>
        <location evidence="1">Cell membrane</location>
        <topology evidence="1">Peripheral membrane protein</topology>
    </subcellularLocation>
</comment>
<comment type="similarity">
    <text evidence="2">Belongs to the RGI1 family.</text>
</comment>
<name>RGI1_EREGS</name>
<protein>
    <recommendedName>
        <fullName>Respiratory growth induced protein 1</fullName>
    </recommendedName>
</protein>
<gene>
    <name type="primary">RGI1</name>
    <name type="ordered locus">ADL065W</name>
</gene>
<proteinExistence type="inferred from homology"/>